<organism>
    <name type="scientific">Listeria innocua serovar 6a (strain ATCC BAA-680 / CLIP 11262)</name>
    <dbReference type="NCBI Taxonomy" id="272626"/>
    <lineage>
        <taxon>Bacteria</taxon>
        <taxon>Bacillati</taxon>
        <taxon>Bacillota</taxon>
        <taxon>Bacilli</taxon>
        <taxon>Bacillales</taxon>
        <taxon>Listeriaceae</taxon>
        <taxon>Listeria</taxon>
    </lineage>
</organism>
<accession>Q7AP36</accession>
<comment type="function">
    <text evidence="1">Could be involved in septation.</text>
</comment>
<comment type="similarity">
    <text evidence="1">Belongs to the SpoVG family.</text>
</comment>
<evidence type="ECO:0000255" key="1">
    <source>
        <dbReference type="HAMAP-Rule" id="MF_00819"/>
    </source>
</evidence>
<dbReference type="EMBL" id="AL596164">
    <property type="protein sequence ID" value="CAC95469.1"/>
    <property type="molecule type" value="Genomic_DNA"/>
</dbReference>
<dbReference type="SMR" id="Q7AP36"/>
<dbReference type="STRING" id="272626.gene:17564548"/>
<dbReference type="KEGG" id="lin:lin0236"/>
<dbReference type="eggNOG" id="COG2088">
    <property type="taxonomic scope" value="Bacteria"/>
</dbReference>
<dbReference type="HOGENOM" id="CLU_103669_2_1_9"/>
<dbReference type="OrthoDB" id="9796286at2"/>
<dbReference type="Proteomes" id="UP000002513">
    <property type="component" value="Chromosome"/>
</dbReference>
<dbReference type="GO" id="GO:0000917">
    <property type="term" value="P:division septum assembly"/>
    <property type="evidence" value="ECO:0007669"/>
    <property type="project" value="UniProtKB-KW"/>
</dbReference>
<dbReference type="GO" id="GO:0030435">
    <property type="term" value="P:sporulation resulting in formation of a cellular spore"/>
    <property type="evidence" value="ECO:0007669"/>
    <property type="project" value="InterPro"/>
</dbReference>
<dbReference type="FunFam" id="3.30.1120.40:FF:000001">
    <property type="entry name" value="Putative septation protein SpoVG"/>
    <property type="match status" value="1"/>
</dbReference>
<dbReference type="Gene3D" id="3.30.1120.40">
    <property type="entry name" value="Stage V sporulation protein G"/>
    <property type="match status" value="1"/>
</dbReference>
<dbReference type="HAMAP" id="MF_00819">
    <property type="entry name" value="SpoVG"/>
    <property type="match status" value="1"/>
</dbReference>
<dbReference type="InterPro" id="IPR007170">
    <property type="entry name" value="SpoVG"/>
</dbReference>
<dbReference type="InterPro" id="IPR036751">
    <property type="entry name" value="SpoVG_sf"/>
</dbReference>
<dbReference type="NCBIfam" id="NF009749">
    <property type="entry name" value="PRK13259.1"/>
    <property type="match status" value="1"/>
</dbReference>
<dbReference type="PANTHER" id="PTHR38429">
    <property type="entry name" value="SEPTATION PROTEIN SPOVG-RELATED"/>
    <property type="match status" value="1"/>
</dbReference>
<dbReference type="PANTHER" id="PTHR38429:SF1">
    <property type="entry name" value="SEPTATION PROTEIN SPOVG-RELATED"/>
    <property type="match status" value="1"/>
</dbReference>
<dbReference type="Pfam" id="PF04026">
    <property type="entry name" value="SpoVG"/>
    <property type="match status" value="1"/>
</dbReference>
<dbReference type="SUPFAM" id="SSF160537">
    <property type="entry name" value="SpoVG-like"/>
    <property type="match status" value="1"/>
</dbReference>
<reference key="1">
    <citation type="journal article" date="2001" name="Science">
        <title>Comparative genomics of Listeria species.</title>
        <authorList>
            <person name="Glaser P."/>
            <person name="Frangeul L."/>
            <person name="Buchrieser C."/>
            <person name="Rusniok C."/>
            <person name="Amend A."/>
            <person name="Baquero F."/>
            <person name="Berche P."/>
            <person name="Bloecker H."/>
            <person name="Brandt P."/>
            <person name="Chakraborty T."/>
            <person name="Charbit A."/>
            <person name="Chetouani F."/>
            <person name="Couve E."/>
            <person name="de Daruvar A."/>
            <person name="Dehoux P."/>
            <person name="Domann E."/>
            <person name="Dominguez-Bernal G."/>
            <person name="Duchaud E."/>
            <person name="Durant L."/>
            <person name="Dussurget O."/>
            <person name="Entian K.-D."/>
            <person name="Fsihi H."/>
            <person name="Garcia-del Portillo F."/>
            <person name="Garrido P."/>
            <person name="Gautier L."/>
            <person name="Goebel W."/>
            <person name="Gomez-Lopez N."/>
            <person name="Hain T."/>
            <person name="Hauf J."/>
            <person name="Jackson D."/>
            <person name="Jones L.-M."/>
            <person name="Kaerst U."/>
            <person name="Kreft J."/>
            <person name="Kuhn M."/>
            <person name="Kunst F."/>
            <person name="Kurapkat G."/>
            <person name="Madueno E."/>
            <person name="Maitournam A."/>
            <person name="Mata Vicente J."/>
            <person name="Ng E."/>
            <person name="Nedjari H."/>
            <person name="Nordsiek G."/>
            <person name="Novella S."/>
            <person name="de Pablos B."/>
            <person name="Perez-Diaz J.-C."/>
            <person name="Purcell R."/>
            <person name="Remmel B."/>
            <person name="Rose M."/>
            <person name="Schlueter T."/>
            <person name="Simoes N."/>
            <person name="Tierrez A."/>
            <person name="Vazquez-Boland J.-A."/>
            <person name="Voss H."/>
            <person name="Wehland J."/>
            <person name="Cossart P."/>
        </authorList>
    </citation>
    <scope>NUCLEOTIDE SEQUENCE [LARGE SCALE GENOMIC DNA]</scope>
    <source>
        <strain>ATCC BAA-680 / CLIP 11262</strain>
    </source>
</reference>
<sequence length="102" mass="11404">MQVTDVRLRRVETDGRMRAIASITLDEEFVVHDIRVIDGNNGLFVAMPSKRGVDGEFRDIAHPINSDTRAKIQEVVLAEYERVGEEEATAVTEEESESVSAE</sequence>
<protein>
    <recommendedName>
        <fullName evidence="1">Putative septation protein SpoVG 2</fullName>
    </recommendedName>
</protein>
<keyword id="KW-0131">Cell cycle</keyword>
<keyword id="KW-0132">Cell division</keyword>
<keyword id="KW-0717">Septation</keyword>
<feature type="chain" id="PRO_0000157197" description="Putative septation protein SpoVG 2">
    <location>
        <begin position="1"/>
        <end position="102"/>
    </location>
</feature>
<gene>
    <name evidence="1" type="primary">spoVG2</name>
    <name type="ordered locus">lin0236</name>
</gene>
<proteinExistence type="inferred from homology"/>
<name>SP5G2_LISIN</name>